<protein>
    <recommendedName>
        <fullName evidence="1">Formate-dependent phosphoribosylglycinamide formyltransferase</fullName>
        <ecNumber evidence="1">6.3.1.21</ecNumber>
    </recommendedName>
    <alternativeName>
        <fullName evidence="1">5'-phosphoribosylglycinamide transformylase 2</fullName>
    </alternativeName>
    <alternativeName>
        <fullName evidence="1">Formate-dependent GAR transformylase</fullName>
    </alternativeName>
    <alternativeName>
        <fullName evidence="1">GAR transformylase 2</fullName>
        <shortName evidence="1">GART 2</shortName>
    </alternativeName>
    <alternativeName>
        <fullName evidence="1">Non-folate glycinamide ribonucleotide transformylase</fullName>
    </alternativeName>
    <alternativeName>
        <fullName evidence="1">Phosphoribosylglycinamide formyltransferase 2</fullName>
    </alternativeName>
</protein>
<keyword id="KW-0067">ATP-binding</keyword>
<keyword id="KW-0436">Ligase</keyword>
<keyword id="KW-0460">Magnesium</keyword>
<keyword id="KW-0479">Metal-binding</keyword>
<keyword id="KW-0547">Nucleotide-binding</keyword>
<keyword id="KW-0658">Purine biosynthesis</keyword>
<keyword id="KW-1185">Reference proteome</keyword>
<sequence length="386" mass="42628">MKILLLGSGELGKEFAIAAQRIGQTIIAVDNYPNAPAMQVAHQFEVINMLDGSELDRIVAKHQPDFIVPEIEAIRTERFYEYEKQGITVVPSAKAANFTMNRKAIRDLAAKELGLKTANYRYATSAEELQKGVQAVGMPCVVKPLMSSSGKGQSTIKTVEDIEKAWNYAVEGSRGDVVEVIVEAFVKFNSEITLLTVAQNNNPTLFCAPIGHRQERGDYQESWQPARISDKDLHEAQDMARKVTEALGGAGLFGVEFFLTNDGVYFSELSPRPHDTGMVTLAGTQNFNEFELHLRAILSLPIFDITLEKAGARAVILASENSNNPTYSGIENIACLPKSDFRIFGKPTSRPYRRMGVVLTNDTLETPIEEIVTRAKKMATLVKVNL</sequence>
<feature type="chain" id="PRO_0000319166" description="Formate-dependent phosphoribosylglycinamide formyltransferase">
    <location>
        <begin position="1"/>
        <end position="386"/>
    </location>
</feature>
<feature type="domain" description="ATP-grasp" evidence="1">
    <location>
        <begin position="107"/>
        <end position="298"/>
    </location>
</feature>
<feature type="binding site" evidence="1">
    <location>
        <begin position="10"/>
        <end position="11"/>
    </location>
    <ligand>
        <name>N(1)-(5-phospho-beta-D-ribosyl)glycinamide</name>
        <dbReference type="ChEBI" id="CHEBI:143788"/>
    </ligand>
</feature>
<feature type="binding site" evidence="1">
    <location>
        <position position="70"/>
    </location>
    <ligand>
        <name>N(1)-(5-phospho-beta-D-ribosyl)glycinamide</name>
        <dbReference type="ChEBI" id="CHEBI:143788"/>
    </ligand>
</feature>
<feature type="binding site" evidence="1">
    <location>
        <position position="102"/>
    </location>
    <ligand>
        <name>ATP</name>
        <dbReference type="ChEBI" id="CHEBI:30616"/>
    </ligand>
</feature>
<feature type="binding site" evidence="1">
    <location>
        <position position="143"/>
    </location>
    <ligand>
        <name>ATP</name>
        <dbReference type="ChEBI" id="CHEBI:30616"/>
    </ligand>
</feature>
<feature type="binding site" evidence="1">
    <location>
        <begin position="148"/>
        <end position="153"/>
    </location>
    <ligand>
        <name>ATP</name>
        <dbReference type="ChEBI" id="CHEBI:30616"/>
    </ligand>
</feature>
<feature type="binding site" evidence="1">
    <location>
        <begin position="183"/>
        <end position="186"/>
    </location>
    <ligand>
        <name>ATP</name>
        <dbReference type="ChEBI" id="CHEBI:30616"/>
    </ligand>
</feature>
<feature type="binding site" evidence="1">
    <location>
        <position position="191"/>
    </location>
    <ligand>
        <name>ATP</name>
        <dbReference type="ChEBI" id="CHEBI:30616"/>
    </ligand>
</feature>
<feature type="binding site" evidence="1">
    <location>
        <position position="256"/>
    </location>
    <ligand>
        <name>Mg(2+)</name>
        <dbReference type="ChEBI" id="CHEBI:18420"/>
    </ligand>
</feature>
<feature type="binding site" evidence="1">
    <location>
        <position position="268"/>
    </location>
    <ligand>
        <name>Mg(2+)</name>
        <dbReference type="ChEBI" id="CHEBI:18420"/>
    </ligand>
</feature>
<feature type="binding site" evidence="1">
    <location>
        <position position="275"/>
    </location>
    <ligand>
        <name>N(1)-(5-phospho-beta-D-ribosyl)glycinamide</name>
        <dbReference type="ChEBI" id="CHEBI:143788"/>
    </ligand>
</feature>
<feature type="binding site" evidence="1">
    <location>
        <position position="346"/>
    </location>
    <ligand>
        <name>N(1)-(5-phospho-beta-D-ribosyl)glycinamide</name>
        <dbReference type="ChEBI" id="CHEBI:143788"/>
    </ligand>
</feature>
<feature type="binding site" evidence="1">
    <location>
        <begin position="353"/>
        <end position="354"/>
    </location>
    <ligand>
        <name>N(1)-(5-phospho-beta-D-ribosyl)glycinamide</name>
        <dbReference type="ChEBI" id="CHEBI:143788"/>
    </ligand>
</feature>
<evidence type="ECO:0000255" key="1">
    <source>
        <dbReference type="HAMAP-Rule" id="MF_01643"/>
    </source>
</evidence>
<reference key="1">
    <citation type="journal article" date="2007" name="Nat. Biotechnol.">
        <title>Complete genome sequence of the fish pathogen Flavobacterium psychrophilum.</title>
        <authorList>
            <person name="Duchaud E."/>
            <person name="Boussaha M."/>
            <person name="Loux V."/>
            <person name="Bernardet J.-F."/>
            <person name="Michel C."/>
            <person name="Kerouault B."/>
            <person name="Mondot S."/>
            <person name="Nicolas P."/>
            <person name="Bossy R."/>
            <person name="Caron C."/>
            <person name="Bessieres P."/>
            <person name="Gibrat J.-F."/>
            <person name="Claverol S."/>
            <person name="Dumetz F."/>
            <person name="Le Henaff M."/>
            <person name="Benmansour A."/>
        </authorList>
    </citation>
    <scope>NUCLEOTIDE SEQUENCE [LARGE SCALE GENOMIC DNA]</scope>
    <source>
        <strain>ATCC 49511 / DSM 21280 / CIP 103535 / JIP02/86</strain>
    </source>
</reference>
<dbReference type="EC" id="6.3.1.21" evidence="1"/>
<dbReference type="EMBL" id="AM398681">
    <property type="protein sequence ID" value="CAL42522.1"/>
    <property type="molecule type" value="Genomic_DNA"/>
</dbReference>
<dbReference type="RefSeq" id="YP_001295340.1">
    <property type="nucleotide sequence ID" value="NC_009613.3"/>
</dbReference>
<dbReference type="SMR" id="A6GWP9"/>
<dbReference type="STRING" id="402612.FP0411"/>
<dbReference type="EnsemblBacteria" id="CAL42522">
    <property type="protein sequence ID" value="CAL42522"/>
    <property type="gene ID" value="FP0411"/>
</dbReference>
<dbReference type="KEGG" id="fps:FP0411"/>
<dbReference type="PATRIC" id="fig|402612.5.peg.423"/>
<dbReference type="eggNOG" id="COG0027">
    <property type="taxonomic scope" value="Bacteria"/>
</dbReference>
<dbReference type="HOGENOM" id="CLU_011534_1_3_10"/>
<dbReference type="OrthoDB" id="9804625at2"/>
<dbReference type="UniPathway" id="UPA00074">
    <property type="reaction ID" value="UER00127"/>
</dbReference>
<dbReference type="Proteomes" id="UP000006394">
    <property type="component" value="Chromosome"/>
</dbReference>
<dbReference type="GO" id="GO:0005829">
    <property type="term" value="C:cytosol"/>
    <property type="evidence" value="ECO:0007669"/>
    <property type="project" value="TreeGrafter"/>
</dbReference>
<dbReference type="GO" id="GO:0005524">
    <property type="term" value="F:ATP binding"/>
    <property type="evidence" value="ECO:0007669"/>
    <property type="project" value="UniProtKB-UniRule"/>
</dbReference>
<dbReference type="GO" id="GO:0000287">
    <property type="term" value="F:magnesium ion binding"/>
    <property type="evidence" value="ECO:0007669"/>
    <property type="project" value="InterPro"/>
</dbReference>
<dbReference type="GO" id="GO:0043815">
    <property type="term" value="F:phosphoribosylglycinamide formyltransferase 2 activity"/>
    <property type="evidence" value="ECO:0007669"/>
    <property type="project" value="UniProtKB-UniRule"/>
</dbReference>
<dbReference type="GO" id="GO:0004644">
    <property type="term" value="F:phosphoribosylglycinamide formyltransferase activity"/>
    <property type="evidence" value="ECO:0007669"/>
    <property type="project" value="InterPro"/>
</dbReference>
<dbReference type="GO" id="GO:0006189">
    <property type="term" value="P:'de novo' IMP biosynthetic process"/>
    <property type="evidence" value="ECO:0007669"/>
    <property type="project" value="UniProtKB-UniRule"/>
</dbReference>
<dbReference type="FunFam" id="3.30.1490.20:FF:000013">
    <property type="entry name" value="Formate-dependent phosphoribosylglycinamide formyltransferase"/>
    <property type="match status" value="1"/>
</dbReference>
<dbReference type="FunFam" id="3.30.470.20:FF:000035">
    <property type="entry name" value="Formate-dependent phosphoribosylglycinamide formyltransferase"/>
    <property type="match status" value="1"/>
</dbReference>
<dbReference type="FunFam" id="3.40.50.20:FF:000022">
    <property type="entry name" value="Formate-dependent phosphoribosylglycinamide formyltransferase"/>
    <property type="match status" value="1"/>
</dbReference>
<dbReference type="Gene3D" id="3.40.50.20">
    <property type="match status" value="1"/>
</dbReference>
<dbReference type="Gene3D" id="3.30.1490.20">
    <property type="entry name" value="ATP-grasp fold, A domain"/>
    <property type="match status" value="1"/>
</dbReference>
<dbReference type="Gene3D" id="3.30.470.20">
    <property type="entry name" value="ATP-grasp fold, B domain"/>
    <property type="match status" value="1"/>
</dbReference>
<dbReference type="HAMAP" id="MF_01643">
    <property type="entry name" value="PurT"/>
    <property type="match status" value="1"/>
</dbReference>
<dbReference type="InterPro" id="IPR011761">
    <property type="entry name" value="ATP-grasp"/>
</dbReference>
<dbReference type="InterPro" id="IPR003135">
    <property type="entry name" value="ATP-grasp_carboxylate-amine"/>
</dbReference>
<dbReference type="InterPro" id="IPR013815">
    <property type="entry name" value="ATP_grasp_subdomain_1"/>
</dbReference>
<dbReference type="InterPro" id="IPR016185">
    <property type="entry name" value="PreATP-grasp_dom_sf"/>
</dbReference>
<dbReference type="InterPro" id="IPR005862">
    <property type="entry name" value="PurT"/>
</dbReference>
<dbReference type="InterPro" id="IPR054350">
    <property type="entry name" value="PurT/PurK_preATP-grasp"/>
</dbReference>
<dbReference type="InterPro" id="IPR048740">
    <property type="entry name" value="PurT_C"/>
</dbReference>
<dbReference type="InterPro" id="IPR011054">
    <property type="entry name" value="Rudment_hybrid_motif"/>
</dbReference>
<dbReference type="NCBIfam" id="NF006766">
    <property type="entry name" value="PRK09288.1"/>
    <property type="match status" value="1"/>
</dbReference>
<dbReference type="NCBIfam" id="TIGR01142">
    <property type="entry name" value="purT"/>
    <property type="match status" value="1"/>
</dbReference>
<dbReference type="PANTHER" id="PTHR43055">
    <property type="entry name" value="FORMATE-DEPENDENT PHOSPHORIBOSYLGLYCINAMIDE FORMYLTRANSFERASE"/>
    <property type="match status" value="1"/>
</dbReference>
<dbReference type="PANTHER" id="PTHR43055:SF1">
    <property type="entry name" value="FORMATE-DEPENDENT PHOSPHORIBOSYLGLYCINAMIDE FORMYLTRANSFERASE"/>
    <property type="match status" value="1"/>
</dbReference>
<dbReference type="Pfam" id="PF02222">
    <property type="entry name" value="ATP-grasp"/>
    <property type="match status" value="1"/>
</dbReference>
<dbReference type="Pfam" id="PF21244">
    <property type="entry name" value="PurT_C"/>
    <property type="match status" value="1"/>
</dbReference>
<dbReference type="Pfam" id="PF22660">
    <property type="entry name" value="RS_preATP-grasp-like"/>
    <property type="match status" value="1"/>
</dbReference>
<dbReference type="SUPFAM" id="SSF56059">
    <property type="entry name" value="Glutathione synthetase ATP-binding domain-like"/>
    <property type="match status" value="1"/>
</dbReference>
<dbReference type="SUPFAM" id="SSF52440">
    <property type="entry name" value="PreATP-grasp domain"/>
    <property type="match status" value="1"/>
</dbReference>
<dbReference type="SUPFAM" id="SSF51246">
    <property type="entry name" value="Rudiment single hybrid motif"/>
    <property type="match status" value="1"/>
</dbReference>
<dbReference type="PROSITE" id="PS50975">
    <property type="entry name" value="ATP_GRASP"/>
    <property type="match status" value="1"/>
</dbReference>
<organism>
    <name type="scientific">Flavobacterium psychrophilum (strain ATCC 49511 / DSM 21280 / CIP 103535 / JIP02/86)</name>
    <dbReference type="NCBI Taxonomy" id="402612"/>
    <lineage>
        <taxon>Bacteria</taxon>
        <taxon>Pseudomonadati</taxon>
        <taxon>Bacteroidota</taxon>
        <taxon>Flavobacteriia</taxon>
        <taxon>Flavobacteriales</taxon>
        <taxon>Flavobacteriaceae</taxon>
        <taxon>Flavobacterium</taxon>
    </lineage>
</organism>
<accession>A6GWP9</accession>
<comment type="function">
    <text evidence="1">Involved in the de novo purine biosynthesis. Catalyzes the transfer of formate to 5-phospho-ribosyl-glycinamide (GAR), producing 5-phospho-ribosyl-N-formylglycinamide (FGAR). Formate is provided by PurU via hydrolysis of 10-formyl-tetrahydrofolate.</text>
</comment>
<comment type="catalytic activity">
    <reaction evidence="1">
        <text>N(1)-(5-phospho-beta-D-ribosyl)glycinamide + formate + ATP = N(2)-formyl-N(1)-(5-phospho-beta-D-ribosyl)glycinamide + ADP + phosphate + H(+)</text>
        <dbReference type="Rhea" id="RHEA:24829"/>
        <dbReference type="ChEBI" id="CHEBI:15378"/>
        <dbReference type="ChEBI" id="CHEBI:15740"/>
        <dbReference type="ChEBI" id="CHEBI:30616"/>
        <dbReference type="ChEBI" id="CHEBI:43474"/>
        <dbReference type="ChEBI" id="CHEBI:143788"/>
        <dbReference type="ChEBI" id="CHEBI:147286"/>
        <dbReference type="ChEBI" id="CHEBI:456216"/>
        <dbReference type="EC" id="6.3.1.21"/>
    </reaction>
    <physiologicalReaction direction="left-to-right" evidence="1">
        <dbReference type="Rhea" id="RHEA:24830"/>
    </physiologicalReaction>
</comment>
<comment type="pathway">
    <text evidence="1">Purine metabolism; IMP biosynthesis via de novo pathway; N(2)-formyl-N(1)-(5-phospho-D-ribosyl)glycinamide from N(1)-(5-phospho-D-ribosyl)glycinamide (formate route): step 1/1.</text>
</comment>
<comment type="subunit">
    <text evidence="1">Homodimer.</text>
</comment>
<comment type="similarity">
    <text evidence="1">Belongs to the PurK/PurT family.</text>
</comment>
<gene>
    <name evidence="1" type="primary">purT</name>
    <name type="ordered locus">FP0411</name>
</gene>
<name>PURT_FLAPJ</name>
<proteinExistence type="inferred from homology"/>